<accession>Q31IN8</accession>
<comment type="function">
    <text evidence="1">Peptide chain release factor 1 directs the termination of translation in response to the peptide chain termination codons UAG and UAA.</text>
</comment>
<comment type="subcellular location">
    <subcellularLocation>
        <location evidence="1">Cytoplasm</location>
    </subcellularLocation>
</comment>
<comment type="PTM">
    <text evidence="1">Methylated by PrmC. Methylation increases the termination efficiency of RF1.</text>
</comment>
<comment type="similarity">
    <text evidence="1">Belongs to the prokaryotic/mitochondrial release factor family.</text>
</comment>
<name>RF1_HYDCU</name>
<sequence>MKESIRSKLENLVERLDEVNHLISDPEIINNQNKFRNLTKEHSQLTPVVETFNQFIQNQGDLQEAKDMIKSGDPDLKEMGQEELPELEKQQATLEAELQKMLLPKDPNDDANIFLEIRAGTGGDEAAIFAGDLFRMYSRYAETMRWQVEVINSQEGEHGGYKEIIARIIGDGAYSRLKFESGAHRVQRVPATETQGRVHTSAATVVIMPEAQDVEQIDLNPADLKVDTFRASGAGGQHVNKTDSAIRITHIPTGTVVECQDERSQHKNRARAMSLLASRIMDERQRIHDQEIAQERKSLVGSGDRSERIRTYNYPQGRVTDHRINLTLYKLDEIMQGGLQQVVDPLINEYQAEQLAALSEDSA</sequence>
<proteinExistence type="inferred from homology"/>
<reference key="1">
    <citation type="journal article" date="2006" name="PLoS Biol.">
        <title>The genome of deep-sea vent chemolithoautotroph Thiomicrospira crunogena XCL-2.</title>
        <authorList>
            <person name="Scott K.M."/>
            <person name="Sievert S.M."/>
            <person name="Abril F.N."/>
            <person name="Ball L.A."/>
            <person name="Barrett C.J."/>
            <person name="Blake R.A."/>
            <person name="Boller A.J."/>
            <person name="Chain P.S.G."/>
            <person name="Clark J.A."/>
            <person name="Davis C.R."/>
            <person name="Detter C."/>
            <person name="Do K.F."/>
            <person name="Dobrinski K.P."/>
            <person name="Faza B.I."/>
            <person name="Fitzpatrick K.A."/>
            <person name="Freyermuth S.K."/>
            <person name="Harmer T.L."/>
            <person name="Hauser L.J."/>
            <person name="Huegler M."/>
            <person name="Kerfeld C.A."/>
            <person name="Klotz M.G."/>
            <person name="Kong W.W."/>
            <person name="Land M."/>
            <person name="Lapidus A."/>
            <person name="Larimer F.W."/>
            <person name="Longo D.L."/>
            <person name="Lucas S."/>
            <person name="Malfatti S.A."/>
            <person name="Massey S.E."/>
            <person name="Martin D.D."/>
            <person name="McCuddin Z."/>
            <person name="Meyer F."/>
            <person name="Moore J.L."/>
            <person name="Ocampo L.H. Jr."/>
            <person name="Paul J.H."/>
            <person name="Paulsen I.T."/>
            <person name="Reep D.K."/>
            <person name="Ren Q."/>
            <person name="Ross R.L."/>
            <person name="Sato P.Y."/>
            <person name="Thomas P."/>
            <person name="Tinkham L.E."/>
            <person name="Zeruth G.T."/>
        </authorList>
    </citation>
    <scope>NUCLEOTIDE SEQUENCE [LARGE SCALE GENOMIC DNA]</scope>
    <source>
        <strain>DSM 25203 / XCL-2</strain>
    </source>
</reference>
<gene>
    <name evidence="1" type="primary">prfA</name>
    <name type="ordered locus">Tcr_0389</name>
</gene>
<feature type="chain" id="PRO_0000263384" description="Peptide chain release factor 1">
    <location>
        <begin position="1"/>
        <end position="363"/>
    </location>
</feature>
<feature type="modified residue" description="N5-methylglutamine" evidence="1">
    <location>
        <position position="237"/>
    </location>
</feature>
<organism>
    <name type="scientific">Hydrogenovibrio crunogenus (strain DSM 25203 / XCL-2)</name>
    <name type="common">Thiomicrospira crunogena</name>
    <dbReference type="NCBI Taxonomy" id="317025"/>
    <lineage>
        <taxon>Bacteria</taxon>
        <taxon>Pseudomonadati</taxon>
        <taxon>Pseudomonadota</taxon>
        <taxon>Gammaproteobacteria</taxon>
        <taxon>Thiotrichales</taxon>
        <taxon>Piscirickettsiaceae</taxon>
        <taxon>Hydrogenovibrio</taxon>
    </lineage>
</organism>
<dbReference type="EMBL" id="CP000109">
    <property type="protein sequence ID" value="ABB40985.1"/>
    <property type="molecule type" value="Genomic_DNA"/>
</dbReference>
<dbReference type="SMR" id="Q31IN8"/>
<dbReference type="STRING" id="317025.Tcr_0389"/>
<dbReference type="KEGG" id="tcx:Tcr_0389"/>
<dbReference type="eggNOG" id="COG0216">
    <property type="taxonomic scope" value="Bacteria"/>
</dbReference>
<dbReference type="HOGENOM" id="CLU_036856_0_1_6"/>
<dbReference type="OrthoDB" id="9806673at2"/>
<dbReference type="GO" id="GO:0005737">
    <property type="term" value="C:cytoplasm"/>
    <property type="evidence" value="ECO:0007669"/>
    <property type="project" value="UniProtKB-SubCell"/>
</dbReference>
<dbReference type="GO" id="GO:0016149">
    <property type="term" value="F:translation release factor activity, codon specific"/>
    <property type="evidence" value="ECO:0007669"/>
    <property type="project" value="UniProtKB-UniRule"/>
</dbReference>
<dbReference type="FunFam" id="3.30.160.20:FF:000004">
    <property type="entry name" value="Peptide chain release factor 1"/>
    <property type="match status" value="1"/>
</dbReference>
<dbReference type="FunFam" id="3.30.70.1660:FF:000002">
    <property type="entry name" value="Peptide chain release factor 1"/>
    <property type="match status" value="1"/>
</dbReference>
<dbReference type="FunFam" id="3.30.70.1660:FF:000004">
    <property type="entry name" value="Peptide chain release factor 1"/>
    <property type="match status" value="1"/>
</dbReference>
<dbReference type="Gene3D" id="3.30.160.20">
    <property type="match status" value="1"/>
</dbReference>
<dbReference type="Gene3D" id="3.30.70.1660">
    <property type="match status" value="2"/>
</dbReference>
<dbReference type="Gene3D" id="6.10.140.1950">
    <property type="match status" value="1"/>
</dbReference>
<dbReference type="HAMAP" id="MF_00093">
    <property type="entry name" value="Rel_fac_1"/>
    <property type="match status" value="1"/>
</dbReference>
<dbReference type="InterPro" id="IPR005139">
    <property type="entry name" value="PCRF"/>
</dbReference>
<dbReference type="InterPro" id="IPR000352">
    <property type="entry name" value="Pep_chain_release_fac_I"/>
</dbReference>
<dbReference type="InterPro" id="IPR045853">
    <property type="entry name" value="Pep_chain_release_fac_I_sf"/>
</dbReference>
<dbReference type="InterPro" id="IPR050057">
    <property type="entry name" value="Prokaryotic/Mito_RF"/>
</dbReference>
<dbReference type="InterPro" id="IPR004373">
    <property type="entry name" value="RF-1"/>
</dbReference>
<dbReference type="NCBIfam" id="TIGR00019">
    <property type="entry name" value="prfA"/>
    <property type="match status" value="1"/>
</dbReference>
<dbReference type="NCBIfam" id="NF001859">
    <property type="entry name" value="PRK00591.1"/>
    <property type="match status" value="1"/>
</dbReference>
<dbReference type="PANTHER" id="PTHR43804">
    <property type="entry name" value="LD18447P"/>
    <property type="match status" value="1"/>
</dbReference>
<dbReference type="PANTHER" id="PTHR43804:SF7">
    <property type="entry name" value="LD18447P"/>
    <property type="match status" value="1"/>
</dbReference>
<dbReference type="Pfam" id="PF03462">
    <property type="entry name" value="PCRF"/>
    <property type="match status" value="1"/>
</dbReference>
<dbReference type="Pfam" id="PF00472">
    <property type="entry name" value="RF-1"/>
    <property type="match status" value="1"/>
</dbReference>
<dbReference type="SMART" id="SM00937">
    <property type="entry name" value="PCRF"/>
    <property type="match status" value="1"/>
</dbReference>
<dbReference type="SUPFAM" id="SSF75620">
    <property type="entry name" value="Release factor"/>
    <property type="match status" value="1"/>
</dbReference>
<dbReference type="PROSITE" id="PS00745">
    <property type="entry name" value="RF_PROK_I"/>
    <property type="match status" value="1"/>
</dbReference>
<evidence type="ECO:0000255" key="1">
    <source>
        <dbReference type="HAMAP-Rule" id="MF_00093"/>
    </source>
</evidence>
<protein>
    <recommendedName>
        <fullName evidence="1">Peptide chain release factor 1</fullName>
        <shortName evidence="1">RF-1</shortName>
    </recommendedName>
</protein>
<keyword id="KW-0963">Cytoplasm</keyword>
<keyword id="KW-0488">Methylation</keyword>
<keyword id="KW-0648">Protein biosynthesis</keyword>